<evidence type="ECO:0000255" key="1">
    <source>
        <dbReference type="HAMAP-Rule" id="MF_01306"/>
    </source>
</evidence>
<evidence type="ECO:0000305" key="2"/>
<gene>
    <name evidence="1" type="primary">rps4</name>
    <name type="ordered locus">Pars_1893</name>
</gene>
<feature type="chain" id="PRO_0000293410" description="Small ribosomal subunit protein uS4">
    <location>
        <begin position="1"/>
        <end position="159"/>
    </location>
</feature>
<feature type="domain" description="S4 RNA-binding" evidence="1">
    <location>
        <begin position="106"/>
        <end position="158"/>
    </location>
</feature>
<comment type="function">
    <text evidence="1">One of the primary rRNA binding proteins, it binds directly to 16S rRNA where it nucleates assembly of the body of the 30S subunit.</text>
</comment>
<comment type="function">
    <text evidence="1">With S5 and S12 plays an important role in translational accuracy.</text>
</comment>
<comment type="subunit">
    <text evidence="1">Part of the 30S ribosomal subunit. Contacts protein S5. The interaction surface between S4 and S5 is involved in control of translational fidelity.</text>
</comment>
<comment type="similarity">
    <text evidence="1">Belongs to the universal ribosomal protein uS4 family.</text>
</comment>
<name>RS4_PYRAR</name>
<sequence>MGGLRKPKKKYLAGKPKKIWNKQLLLEELQLMGEYGLRNKRELWLARARLKWITRRARSLLSMTAEERAPLEMPFKEKLYKAGFIEDPNVPLDRILSLDVRAILERRLQTIVYRMGLAKSIYHARQLIVHGHIAIEGRRVTSPGFLVPRELEDKITLVQ</sequence>
<organism>
    <name type="scientific">Pyrobaculum arsenaticum (strain DSM 13514 / JCM 11321 / PZ6)</name>
    <dbReference type="NCBI Taxonomy" id="340102"/>
    <lineage>
        <taxon>Archaea</taxon>
        <taxon>Thermoproteota</taxon>
        <taxon>Thermoprotei</taxon>
        <taxon>Thermoproteales</taxon>
        <taxon>Thermoproteaceae</taxon>
        <taxon>Pyrobaculum</taxon>
    </lineage>
</organism>
<keyword id="KW-0687">Ribonucleoprotein</keyword>
<keyword id="KW-0689">Ribosomal protein</keyword>
<keyword id="KW-0694">RNA-binding</keyword>
<keyword id="KW-0699">rRNA-binding</keyword>
<proteinExistence type="inferred from homology"/>
<protein>
    <recommendedName>
        <fullName evidence="1">Small ribosomal subunit protein uS4</fullName>
    </recommendedName>
    <alternativeName>
        <fullName evidence="2">30S ribosomal protein S4</fullName>
    </alternativeName>
</protein>
<dbReference type="EMBL" id="CP000660">
    <property type="protein sequence ID" value="ABP51444.1"/>
    <property type="molecule type" value="Genomic_DNA"/>
</dbReference>
<dbReference type="SMR" id="A4WM27"/>
<dbReference type="STRING" id="340102.Pars_1893"/>
<dbReference type="KEGG" id="pas:Pars_1893"/>
<dbReference type="HOGENOM" id="CLU_089738_1_1_2"/>
<dbReference type="OrthoDB" id="10429at2157"/>
<dbReference type="PhylomeDB" id="A4WM27"/>
<dbReference type="Proteomes" id="UP000001567">
    <property type="component" value="Chromosome"/>
</dbReference>
<dbReference type="GO" id="GO:0015935">
    <property type="term" value="C:small ribosomal subunit"/>
    <property type="evidence" value="ECO:0007669"/>
    <property type="project" value="InterPro"/>
</dbReference>
<dbReference type="GO" id="GO:0019843">
    <property type="term" value="F:rRNA binding"/>
    <property type="evidence" value="ECO:0007669"/>
    <property type="project" value="UniProtKB-UniRule"/>
</dbReference>
<dbReference type="GO" id="GO:0003735">
    <property type="term" value="F:structural constituent of ribosome"/>
    <property type="evidence" value="ECO:0007669"/>
    <property type="project" value="InterPro"/>
</dbReference>
<dbReference type="GO" id="GO:0042274">
    <property type="term" value="P:ribosomal small subunit biogenesis"/>
    <property type="evidence" value="ECO:0007669"/>
    <property type="project" value="TreeGrafter"/>
</dbReference>
<dbReference type="GO" id="GO:0006412">
    <property type="term" value="P:translation"/>
    <property type="evidence" value="ECO:0007669"/>
    <property type="project" value="UniProtKB-UniRule"/>
</dbReference>
<dbReference type="CDD" id="cd00165">
    <property type="entry name" value="S4"/>
    <property type="match status" value="1"/>
</dbReference>
<dbReference type="Gene3D" id="3.10.290.10">
    <property type="entry name" value="RNA-binding S4 domain"/>
    <property type="match status" value="1"/>
</dbReference>
<dbReference type="HAMAP" id="MF_01306_A">
    <property type="entry name" value="Ribosomal_uS4_A"/>
    <property type="match status" value="1"/>
</dbReference>
<dbReference type="InterPro" id="IPR022801">
    <property type="entry name" value="Ribosomal_uS4"/>
</dbReference>
<dbReference type="InterPro" id="IPR022802">
    <property type="entry name" value="Ribosomal_uS4_arc"/>
</dbReference>
<dbReference type="InterPro" id="IPR018079">
    <property type="entry name" value="Ribosomal_uS4_CS"/>
</dbReference>
<dbReference type="InterPro" id="IPR005710">
    <property type="entry name" value="Ribosomal_uS4_euk/arc"/>
</dbReference>
<dbReference type="InterPro" id="IPR001912">
    <property type="entry name" value="Ribosomal_uS4_N"/>
</dbReference>
<dbReference type="InterPro" id="IPR002942">
    <property type="entry name" value="S4_RNA-bd"/>
</dbReference>
<dbReference type="InterPro" id="IPR036986">
    <property type="entry name" value="S4_RNA-bd_sf"/>
</dbReference>
<dbReference type="NCBIfam" id="NF003139">
    <property type="entry name" value="PRK04051.1"/>
    <property type="match status" value="1"/>
</dbReference>
<dbReference type="NCBIfam" id="TIGR01018">
    <property type="entry name" value="uS4_arch"/>
    <property type="match status" value="1"/>
</dbReference>
<dbReference type="PANTHER" id="PTHR11831">
    <property type="entry name" value="30S 40S RIBOSOMAL PROTEIN"/>
    <property type="match status" value="1"/>
</dbReference>
<dbReference type="PANTHER" id="PTHR11831:SF5">
    <property type="entry name" value="40S RIBOSOMAL PROTEIN S9"/>
    <property type="match status" value="1"/>
</dbReference>
<dbReference type="Pfam" id="PF01479">
    <property type="entry name" value="S4"/>
    <property type="match status" value="1"/>
</dbReference>
<dbReference type="SMART" id="SM01390">
    <property type="entry name" value="Ribosomal_S4"/>
    <property type="match status" value="1"/>
</dbReference>
<dbReference type="SMART" id="SM00363">
    <property type="entry name" value="S4"/>
    <property type="match status" value="1"/>
</dbReference>
<dbReference type="SUPFAM" id="SSF55174">
    <property type="entry name" value="Alpha-L RNA-binding motif"/>
    <property type="match status" value="1"/>
</dbReference>
<dbReference type="PROSITE" id="PS00632">
    <property type="entry name" value="RIBOSOMAL_S4"/>
    <property type="match status" value="1"/>
</dbReference>
<dbReference type="PROSITE" id="PS50889">
    <property type="entry name" value="S4"/>
    <property type="match status" value="1"/>
</dbReference>
<accession>A4WM27</accession>
<reference key="1">
    <citation type="submission" date="2007-04" db="EMBL/GenBank/DDBJ databases">
        <title>Complete sequence of Pyrobaculum arsenaticum DSM 13514.</title>
        <authorList>
            <consortium name="US DOE Joint Genome Institute"/>
            <person name="Copeland A."/>
            <person name="Lucas S."/>
            <person name="Lapidus A."/>
            <person name="Barry K."/>
            <person name="Glavina del Rio T."/>
            <person name="Dalin E."/>
            <person name="Tice H."/>
            <person name="Pitluck S."/>
            <person name="Chain P."/>
            <person name="Malfatti S."/>
            <person name="Shin M."/>
            <person name="Vergez L."/>
            <person name="Schmutz J."/>
            <person name="Larimer F."/>
            <person name="Land M."/>
            <person name="Hauser L."/>
            <person name="Kyrpides N."/>
            <person name="Mikhailova N."/>
            <person name="Cozen A.E."/>
            <person name="Fitz-Gibbon S.T."/>
            <person name="House C.H."/>
            <person name="Saltikov C."/>
            <person name="Lowe T.M."/>
            <person name="Richardson P."/>
        </authorList>
    </citation>
    <scope>NUCLEOTIDE SEQUENCE [LARGE SCALE GENOMIC DNA]</scope>
    <source>
        <strain>ATCC 700994 / DSM 13514 / JCM 11321 / PZ6</strain>
    </source>
</reference>